<sequence>MAAEQVEDYCISFVEMKFINNTLYFVAENDEDLESDHFGKLEPKLSIIRNLNDQVLFINQGNQPVFEDMPDSDCSDNAPQTIFIIYMYKDSLTRGLAVTISVQCKKMSTLSCENKIVSFKEMNPPDNIDNEESDIIFFQRSVPGHDDKIQFESSLYKGYFLACKKENDLFKLILKKQDDNRDKSVMFTVQNQN</sequence>
<comment type="function">
    <text evidence="2">Pro-inflammatory cytokine primarily involved in epithelial barrier repair, polarized T-helper 1 (Th1) cell and natural killer (NK) cell immune responses. Upon binding to IL18R1 and IL18RAP, forms a signaling ternary complex which activates NF-kappa-B, triggering synthesis of inflammatory mediators. Synergizes with IL12/interleukin-12 to induce IFNG synthesis from T-helper 1 (Th1) cells and natural killer (NK) cells. Involved in transduction of inflammation downstream of pyroptosis: its mature form is specifically released in the extracellular milieu by passing through the gasdermin-D (GSDMD) pore.</text>
</comment>
<comment type="subunit">
    <text evidence="2">Forms a ternary complex with ligand-binding receptor subunit IL18R1 and signaling receptor subunit IL18RAP at the plasma membrane. Mature IL18 first binds to IL18R1 forming a low affinity binary complex, which then interacts with IL18RAP to form a high affinity ternary complex that signals inside the cell. Interacts with cargo receptor TMED10; the interaction mediates the translocation from the cytoplasm into the ERGIC (endoplasmic reticulum-Golgi intermediate compartment) and thereby secretion.</text>
</comment>
<comment type="subcellular location">
    <subcellularLocation>
        <location evidence="2">Cytoplasm</location>
        <location evidence="2">Cytosol</location>
    </subcellularLocation>
    <subcellularLocation>
        <location evidence="2">Secreted</location>
    </subcellularLocation>
    <text evidence="2">The precursor is cytosolic. In response to inflammasome-activating signals, cleaved and secreted. Mature form is secreted and released in the extracellular milieu by passing through the gasdermin-D (GSDMD) pore. In contrast, the precursor form is not released, due to the presence of an acidic region that is proteolytically removed by CASP1, CASP4 or CASP5 during maturation. The secretion is dependent on protein unfolding and facilitated by the cargo receptor TMED10.</text>
</comment>
<comment type="PTM">
    <text evidence="2">The pro-IL-18 precursor is processed by CASP1, CASP4 or CASP5 to yield its mature, active form. The pro-IL-18 precursor features autoinhibitory interactions between the propeptide and the post-cleavage-site region, preventing recognition by the IL18R1 receptor. Processing by CASP1, CASP4 or CASP5 induces conformational changes to generate critical receptor-binding sites. The mature form is then secreted and released in the extracellular milieu by passing through the gasdermin-D (GSDMD) pore. In contrast, cleavage by CASP3 inactivates IL18.</text>
</comment>
<comment type="similarity">
    <text evidence="3">Belongs to the IL-1 family.</text>
</comment>
<organism>
    <name type="scientific">Bos taurus</name>
    <name type="common">Bovine</name>
    <dbReference type="NCBI Taxonomy" id="9913"/>
    <lineage>
        <taxon>Eukaryota</taxon>
        <taxon>Metazoa</taxon>
        <taxon>Chordata</taxon>
        <taxon>Craniata</taxon>
        <taxon>Vertebrata</taxon>
        <taxon>Euteleostomi</taxon>
        <taxon>Mammalia</taxon>
        <taxon>Eutheria</taxon>
        <taxon>Laurasiatheria</taxon>
        <taxon>Artiodactyla</taxon>
        <taxon>Ruminantia</taxon>
        <taxon>Pecora</taxon>
        <taxon>Bovidae</taxon>
        <taxon>Bovinae</taxon>
        <taxon>Bos</taxon>
    </lineage>
</organism>
<name>IL18_BOVIN</name>
<accession>Q9TU73</accession>
<accession>A9QWR6</accession>
<accession>Q3SZF6</accession>
<dbReference type="EMBL" id="AF124789">
    <property type="protein sequence ID" value="AAF08686.1"/>
    <property type="molecule type" value="mRNA"/>
</dbReference>
<dbReference type="EMBL" id="EU276078">
    <property type="protein sequence ID" value="ABX72076.1"/>
    <property type="molecule type" value="mRNA"/>
</dbReference>
<dbReference type="EMBL" id="BC102879">
    <property type="protein sequence ID" value="AAI02880.1"/>
    <property type="molecule type" value="mRNA"/>
</dbReference>
<dbReference type="RefSeq" id="NP_776516.1">
    <property type="nucleotide sequence ID" value="NM_174091.2"/>
</dbReference>
<dbReference type="SMR" id="Q9TU73"/>
<dbReference type="FunCoup" id="Q9TU73">
    <property type="interactions" value="246"/>
</dbReference>
<dbReference type="STRING" id="9913.ENSBTAP00000055793"/>
<dbReference type="PaxDb" id="9913-ENSBTAP00000055793"/>
<dbReference type="GeneID" id="281249"/>
<dbReference type="KEGG" id="bta:281249"/>
<dbReference type="CTD" id="3606"/>
<dbReference type="VEuPathDB" id="HostDB:ENSBTAG00000000277"/>
<dbReference type="eggNOG" id="ENOG502SDJZ">
    <property type="taxonomic scope" value="Eukaryota"/>
</dbReference>
<dbReference type="HOGENOM" id="CLU_113349_0_0_1"/>
<dbReference type="InParanoid" id="Q9TU73"/>
<dbReference type="OMA" id="RQFYKFE"/>
<dbReference type="OrthoDB" id="8535973at2759"/>
<dbReference type="TreeFam" id="TF336297"/>
<dbReference type="Reactome" id="R-BTA-448706">
    <property type="pathway name" value="Interleukin-1 processing"/>
</dbReference>
<dbReference type="Reactome" id="R-BTA-5620971">
    <property type="pathway name" value="Pyroptosis"/>
</dbReference>
<dbReference type="Reactome" id="R-BTA-9012546">
    <property type="pathway name" value="Interleukin-18 signaling"/>
</dbReference>
<dbReference type="Proteomes" id="UP000009136">
    <property type="component" value="Chromosome 15"/>
</dbReference>
<dbReference type="Bgee" id="ENSBTAG00000000277">
    <property type="expression patterns" value="Expressed in abdominal lymph node and 100 other cell types or tissues"/>
</dbReference>
<dbReference type="GO" id="GO:0005829">
    <property type="term" value="C:cytosol"/>
    <property type="evidence" value="ECO:0007669"/>
    <property type="project" value="UniProtKB-SubCell"/>
</dbReference>
<dbReference type="GO" id="GO:0005615">
    <property type="term" value="C:extracellular space"/>
    <property type="evidence" value="ECO:0000318"/>
    <property type="project" value="GO_Central"/>
</dbReference>
<dbReference type="GO" id="GO:0005125">
    <property type="term" value="F:cytokine activity"/>
    <property type="evidence" value="ECO:0000250"/>
    <property type="project" value="UniProtKB"/>
</dbReference>
<dbReference type="GO" id="GO:0045515">
    <property type="term" value="F:interleukin-18 receptor binding"/>
    <property type="evidence" value="ECO:0000250"/>
    <property type="project" value="UniProtKB"/>
</dbReference>
<dbReference type="GO" id="GO:0071222">
    <property type="term" value="P:cellular response to lipopolysaccharide"/>
    <property type="evidence" value="ECO:0000318"/>
    <property type="project" value="GO_Central"/>
</dbReference>
<dbReference type="GO" id="GO:0019221">
    <property type="term" value="P:cytokine-mediated signaling pathway"/>
    <property type="evidence" value="ECO:0000318"/>
    <property type="project" value="GO_Central"/>
</dbReference>
<dbReference type="GO" id="GO:0050830">
    <property type="term" value="P:defense response to Gram-positive bacterium"/>
    <property type="evidence" value="ECO:0000250"/>
    <property type="project" value="UniProtKB"/>
</dbReference>
<dbReference type="GO" id="GO:0061436">
    <property type="term" value="P:establishment of skin barrier"/>
    <property type="evidence" value="ECO:0000250"/>
    <property type="project" value="UniProtKB"/>
</dbReference>
<dbReference type="GO" id="GO:0006955">
    <property type="term" value="P:immune response"/>
    <property type="evidence" value="ECO:0000318"/>
    <property type="project" value="GO_Central"/>
</dbReference>
<dbReference type="GO" id="GO:0006954">
    <property type="term" value="P:inflammatory response"/>
    <property type="evidence" value="ECO:0000318"/>
    <property type="project" value="GO_Central"/>
</dbReference>
<dbReference type="GO" id="GO:0035655">
    <property type="term" value="P:interleukin-18-mediated signaling pathway"/>
    <property type="evidence" value="ECO:0000250"/>
    <property type="project" value="UniProtKB"/>
</dbReference>
<dbReference type="GO" id="GO:0050729">
    <property type="term" value="P:positive regulation of inflammatory response"/>
    <property type="evidence" value="ECO:0000250"/>
    <property type="project" value="UniProtKB"/>
</dbReference>
<dbReference type="GO" id="GO:0051092">
    <property type="term" value="P:positive regulation of NF-kappaB transcription factor activity"/>
    <property type="evidence" value="ECO:0000250"/>
    <property type="project" value="UniProtKB"/>
</dbReference>
<dbReference type="GO" id="GO:2000556">
    <property type="term" value="P:positive regulation of T-helper 1 cell cytokine production"/>
    <property type="evidence" value="ECO:0000250"/>
    <property type="project" value="UniProtKB"/>
</dbReference>
<dbReference type="GO" id="GO:0032729">
    <property type="term" value="P:positive regulation of type II interferon production"/>
    <property type="evidence" value="ECO:0000250"/>
    <property type="project" value="UniProtKB"/>
</dbReference>
<dbReference type="CDD" id="cd23298">
    <property type="entry name" value="beta-trefoil_IL18"/>
    <property type="match status" value="1"/>
</dbReference>
<dbReference type="FunFam" id="2.80.10.50:FF:000043">
    <property type="entry name" value="Interleukin-18"/>
    <property type="match status" value="1"/>
</dbReference>
<dbReference type="Gene3D" id="2.80.10.50">
    <property type="match status" value="1"/>
</dbReference>
<dbReference type="InterPro" id="IPR015529">
    <property type="entry name" value="IL-18"/>
</dbReference>
<dbReference type="InterPro" id="IPR000975">
    <property type="entry name" value="IL-1_fam"/>
</dbReference>
<dbReference type="InterPro" id="IPR008996">
    <property type="entry name" value="IL1/FGF"/>
</dbReference>
<dbReference type="PANTHER" id="PTHR10078">
    <property type="entry name" value="INTERLEUKIN-1 FAMILY MEMBER"/>
    <property type="match status" value="1"/>
</dbReference>
<dbReference type="PANTHER" id="PTHR10078:SF35">
    <property type="entry name" value="INTERLEUKIN-18"/>
    <property type="match status" value="1"/>
</dbReference>
<dbReference type="Pfam" id="PF00340">
    <property type="entry name" value="IL1"/>
    <property type="match status" value="1"/>
</dbReference>
<dbReference type="PIRSF" id="PIRSF015162">
    <property type="entry name" value="Interleukin_18"/>
    <property type="match status" value="1"/>
</dbReference>
<dbReference type="PRINTS" id="PR01933">
    <property type="entry name" value="INTRLEUKIN18"/>
</dbReference>
<dbReference type="SUPFAM" id="SSF50353">
    <property type="entry name" value="Cytokine"/>
    <property type="match status" value="1"/>
</dbReference>
<gene>
    <name type="primary">IL18</name>
    <name type="synonym">IGIF</name>
</gene>
<evidence type="ECO:0000250" key="1">
    <source>
        <dbReference type="UniProtKB" id="P70380"/>
    </source>
</evidence>
<evidence type="ECO:0000250" key="2">
    <source>
        <dbReference type="UniProtKB" id="Q14116"/>
    </source>
</evidence>
<evidence type="ECO:0000305" key="3"/>
<feature type="propeptide" id="PRO_0000015337" evidence="1">
    <location>
        <begin position="1"/>
        <end position="36"/>
    </location>
</feature>
<feature type="chain" id="PRO_0000015338" description="Interleukin-18">
    <location>
        <begin position="37"/>
        <end position="193"/>
    </location>
</feature>
<feature type="site" description="Cleavage; by CASP1, CASP4 and CASP5" evidence="2">
    <location>
        <begin position="36"/>
        <end position="37"/>
    </location>
</feature>
<feature type="site" description="Cleavage; by CASP3" evidence="2">
    <location>
        <begin position="71"/>
        <end position="72"/>
    </location>
</feature>
<protein>
    <recommendedName>
        <fullName>Interleukin-18</fullName>
        <shortName>IL-18</shortName>
    </recommendedName>
    <alternativeName>
        <fullName>Interferon gamma-inducing factor</fullName>
        <shortName>IFN-gamma-inducing factor</shortName>
    </alternativeName>
    <alternativeName>
        <fullName>Interleukin-1 gamma</fullName>
        <shortName>IL-1 gamma</shortName>
    </alternativeName>
</protein>
<proteinExistence type="evidence at transcript level"/>
<keyword id="KW-0202">Cytokine</keyword>
<keyword id="KW-0963">Cytoplasm</keyword>
<keyword id="KW-0395">Inflammatory response</keyword>
<keyword id="KW-1185">Reference proteome</keyword>
<keyword id="KW-0964">Secreted</keyword>
<reference key="1">
    <citation type="journal article" date="1999" name="J. Interferon Cytokine Res.">
        <title>Cloning of a cDNA encoding bovine interleukin-18 and analysis of IL-18 expression in macrophages and its IFN-gamma-inducing activity.</title>
        <authorList>
            <person name="Shoda L.K."/>
            <person name="Zarlenga D.S."/>
            <person name="Hirano A."/>
            <person name="Brown W.C."/>
        </authorList>
    </citation>
    <scope>NUCLEOTIDE SEQUENCE [MRNA]</scope>
</reference>
<reference key="2">
    <citation type="submission" date="2007-11" db="EMBL/GenBank/DDBJ databases">
        <title>U.S. veterinary immune reagent network: expressed bovine gene sequences.</title>
        <authorList>
            <consortium name="U.S. Veterinary Immune Reagent Network"/>
            <person name="Hudgens T."/>
            <person name="Tompkins D."/>
            <person name="Baldwin C.L."/>
        </authorList>
    </citation>
    <scope>NUCLEOTIDE SEQUENCE [LARGE SCALE MRNA]</scope>
    <source>
        <strain>Belted Galloway</strain>
        <tissue>Peripheral blood</tissue>
    </source>
</reference>
<reference key="3">
    <citation type="submission" date="2005-08" db="EMBL/GenBank/DDBJ databases">
        <authorList>
            <consortium name="NIH - Mammalian Gene Collection (MGC) project"/>
        </authorList>
    </citation>
    <scope>NUCLEOTIDE SEQUENCE [LARGE SCALE MRNA]</scope>
    <source>
        <strain>Crossbred X Angus</strain>
        <tissue>Ileum</tissue>
    </source>
</reference>